<gene>
    <name evidence="1" type="primary">ispD</name>
    <name type="ordered locus">EcE24377A_3048</name>
</gene>
<reference key="1">
    <citation type="journal article" date="2008" name="J. Bacteriol.">
        <title>The pangenome structure of Escherichia coli: comparative genomic analysis of E. coli commensal and pathogenic isolates.</title>
        <authorList>
            <person name="Rasko D.A."/>
            <person name="Rosovitz M.J."/>
            <person name="Myers G.S.A."/>
            <person name="Mongodin E.F."/>
            <person name="Fricke W.F."/>
            <person name="Gajer P."/>
            <person name="Crabtree J."/>
            <person name="Sebaihia M."/>
            <person name="Thomson N.R."/>
            <person name="Chaudhuri R."/>
            <person name="Henderson I.R."/>
            <person name="Sperandio V."/>
            <person name="Ravel J."/>
        </authorList>
    </citation>
    <scope>NUCLEOTIDE SEQUENCE [LARGE SCALE GENOMIC DNA]</scope>
    <source>
        <strain>E24377A / ETEC</strain>
    </source>
</reference>
<proteinExistence type="inferred from homology"/>
<keyword id="KW-0414">Isoprene biosynthesis</keyword>
<keyword id="KW-0548">Nucleotidyltransferase</keyword>
<keyword id="KW-1185">Reference proteome</keyword>
<keyword id="KW-0808">Transferase</keyword>
<accession>A7ZQJ1</accession>
<feature type="chain" id="PRO_1000057716" description="2-C-methyl-D-erythritol 4-phosphate cytidylyltransferase">
    <location>
        <begin position="1"/>
        <end position="236"/>
    </location>
</feature>
<feature type="site" description="Transition state stabilizer" evidence="1">
    <location>
        <position position="20"/>
    </location>
</feature>
<feature type="site" description="Transition state stabilizer" evidence="1">
    <location>
        <position position="27"/>
    </location>
</feature>
<feature type="site" description="Positions MEP for the nucleophilic attack" evidence="1">
    <location>
        <position position="157"/>
    </location>
</feature>
<feature type="site" description="Positions MEP for the nucleophilic attack" evidence="1">
    <location>
        <position position="213"/>
    </location>
</feature>
<evidence type="ECO:0000255" key="1">
    <source>
        <dbReference type="HAMAP-Rule" id="MF_00108"/>
    </source>
</evidence>
<comment type="function">
    <text evidence="1">Catalyzes the formation of 4-diphosphocytidyl-2-C-methyl-D-erythritol from CTP and 2-C-methyl-D-erythritol 4-phosphate (MEP).</text>
</comment>
<comment type="catalytic activity">
    <reaction evidence="1">
        <text>2-C-methyl-D-erythritol 4-phosphate + CTP + H(+) = 4-CDP-2-C-methyl-D-erythritol + diphosphate</text>
        <dbReference type="Rhea" id="RHEA:13429"/>
        <dbReference type="ChEBI" id="CHEBI:15378"/>
        <dbReference type="ChEBI" id="CHEBI:33019"/>
        <dbReference type="ChEBI" id="CHEBI:37563"/>
        <dbReference type="ChEBI" id="CHEBI:57823"/>
        <dbReference type="ChEBI" id="CHEBI:58262"/>
        <dbReference type="EC" id="2.7.7.60"/>
    </reaction>
</comment>
<comment type="pathway">
    <text evidence="1">Isoprenoid biosynthesis; isopentenyl diphosphate biosynthesis via DXP pathway; isopentenyl diphosphate from 1-deoxy-D-xylulose 5-phosphate: step 2/6.</text>
</comment>
<comment type="subunit">
    <text evidence="1">Homodimer.</text>
</comment>
<comment type="similarity">
    <text evidence="1">Belongs to the IspD/TarI cytidylyltransferase family. IspD subfamily.</text>
</comment>
<dbReference type="EC" id="2.7.7.60" evidence="1"/>
<dbReference type="EMBL" id="CP000800">
    <property type="protein sequence ID" value="ABV16653.1"/>
    <property type="molecule type" value="Genomic_DNA"/>
</dbReference>
<dbReference type="RefSeq" id="WP_000246138.1">
    <property type="nucleotide sequence ID" value="NC_009801.1"/>
</dbReference>
<dbReference type="SMR" id="A7ZQJ1"/>
<dbReference type="GeneID" id="93779259"/>
<dbReference type="KEGG" id="ecw:EcE24377A_3048"/>
<dbReference type="HOGENOM" id="CLU_061281_3_1_6"/>
<dbReference type="UniPathway" id="UPA00056">
    <property type="reaction ID" value="UER00093"/>
</dbReference>
<dbReference type="Proteomes" id="UP000001122">
    <property type="component" value="Chromosome"/>
</dbReference>
<dbReference type="GO" id="GO:0050518">
    <property type="term" value="F:2-C-methyl-D-erythritol 4-phosphate cytidylyltransferase activity"/>
    <property type="evidence" value="ECO:0007669"/>
    <property type="project" value="UniProtKB-UniRule"/>
</dbReference>
<dbReference type="GO" id="GO:0019288">
    <property type="term" value="P:isopentenyl diphosphate biosynthetic process, methylerythritol 4-phosphate pathway"/>
    <property type="evidence" value="ECO:0007669"/>
    <property type="project" value="UniProtKB-UniRule"/>
</dbReference>
<dbReference type="CDD" id="cd02516">
    <property type="entry name" value="CDP-ME_synthetase"/>
    <property type="match status" value="1"/>
</dbReference>
<dbReference type="FunFam" id="3.90.550.10:FF:000003">
    <property type="entry name" value="2-C-methyl-D-erythritol 4-phosphate cytidylyltransferase"/>
    <property type="match status" value="1"/>
</dbReference>
<dbReference type="Gene3D" id="3.90.550.10">
    <property type="entry name" value="Spore Coat Polysaccharide Biosynthesis Protein SpsA, Chain A"/>
    <property type="match status" value="1"/>
</dbReference>
<dbReference type="HAMAP" id="MF_00108">
    <property type="entry name" value="IspD"/>
    <property type="match status" value="1"/>
</dbReference>
<dbReference type="InterPro" id="IPR001228">
    <property type="entry name" value="IspD"/>
</dbReference>
<dbReference type="InterPro" id="IPR034683">
    <property type="entry name" value="IspD/TarI"/>
</dbReference>
<dbReference type="InterPro" id="IPR050088">
    <property type="entry name" value="IspD/TarI_cytidylyltransf_bact"/>
</dbReference>
<dbReference type="InterPro" id="IPR018294">
    <property type="entry name" value="ISPD_synthase_CS"/>
</dbReference>
<dbReference type="InterPro" id="IPR029044">
    <property type="entry name" value="Nucleotide-diphossugar_trans"/>
</dbReference>
<dbReference type="NCBIfam" id="TIGR00453">
    <property type="entry name" value="ispD"/>
    <property type="match status" value="1"/>
</dbReference>
<dbReference type="PANTHER" id="PTHR32125">
    <property type="entry name" value="2-C-METHYL-D-ERYTHRITOL 4-PHOSPHATE CYTIDYLYLTRANSFERASE, CHLOROPLASTIC"/>
    <property type="match status" value="1"/>
</dbReference>
<dbReference type="PANTHER" id="PTHR32125:SF4">
    <property type="entry name" value="2-C-METHYL-D-ERYTHRITOL 4-PHOSPHATE CYTIDYLYLTRANSFERASE, CHLOROPLASTIC"/>
    <property type="match status" value="1"/>
</dbReference>
<dbReference type="Pfam" id="PF01128">
    <property type="entry name" value="IspD"/>
    <property type="match status" value="1"/>
</dbReference>
<dbReference type="SUPFAM" id="SSF53448">
    <property type="entry name" value="Nucleotide-diphospho-sugar transferases"/>
    <property type="match status" value="1"/>
</dbReference>
<dbReference type="PROSITE" id="PS01295">
    <property type="entry name" value="ISPD"/>
    <property type="match status" value="1"/>
</dbReference>
<protein>
    <recommendedName>
        <fullName evidence="1">2-C-methyl-D-erythritol 4-phosphate cytidylyltransferase</fullName>
        <ecNumber evidence="1">2.7.7.60</ecNumber>
    </recommendedName>
    <alternativeName>
        <fullName evidence="1">4-diphosphocytidyl-2C-methyl-D-erythritol synthase</fullName>
    </alternativeName>
    <alternativeName>
        <fullName evidence="1">MEP cytidylyltransferase</fullName>
        <shortName evidence="1">MCT</shortName>
    </alternativeName>
</protein>
<organism>
    <name type="scientific">Escherichia coli O139:H28 (strain E24377A / ETEC)</name>
    <dbReference type="NCBI Taxonomy" id="331111"/>
    <lineage>
        <taxon>Bacteria</taxon>
        <taxon>Pseudomonadati</taxon>
        <taxon>Pseudomonadota</taxon>
        <taxon>Gammaproteobacteria</taxon>
        <taxon>Enterobacterales</taxon>
        <taxon>Enterobacteriaceae</taxon>
        <taxon>Escherichia</taxon>
    </lineage>
</organism>
<sequence length="236" mass="25737">MATTHLDVCAVVPAAGFGRRMQTECPKQYLSIGNQTILEHSVHALLAHPRVKRVVIAISPGDSRFAQLPLANHPQITVVDGGDERADSVLAGLKAAGDAQWVLVHDAARPCLHQDDLARLLALSETSRTGGILAAPVRDTMKRAEPGKNAIAHTVDRNGLWHALTPQFFPRELLHDCLTRALNEGATITDEASALEYCGFHPQLVEGRADNIKVTRPEDLALAEFYLTRTIHQENT</sequence>
<name>ISPD_ECO24</name>